<sequence>MSSSRPAHSSSSSSRTRQSSQARILAQTTLDAELNAEYEESGDSFDYSKLVEAQRSTPSEQQGRSGKVIAYLQHIQRGKLIQPFGCLLALDEKSFRVIAFSENAPEMLTTVSHAVPNVDDPPKLGIGTNVRSLFTDPGATALQKALGFADVSLLNPILVQCKTSGKPFYAIVHRATGCLVVDFEPVKPTEFPATAAGALQSYKLAAKAISKIQSLPGGSMEALCNTVVKEVFELTGYDRVMAYKFHEDEHGEVFAEITKPGIEPYLGLHYPATDIPQAARFLFMKNKVRMICDCRAKSVKIIEDEALSIDISLCGSTLRAPHSCHLQYMENMNSIASLVMAVVVNENEEDDEPGPEQPPQQQKKKRLWGLIVCHHESPRYVPFPLRYACEFLAQVFAVHVNKEFELEKQIREKSILRMQTMLSDMLFKEASPLSIVSGSPNIMDLVKCDGAALLYGDKVWRLQTAPTESQIRDIAFWLSEVHGDSTGLSTDSLQDAGYPGAASLGDMICGMAVAKITSKDILFWFRSHTAAEIKWGGAKHDPSDKDDNRRMHPRLSFKAFLEVVKMKSLPWSDYEMDAIHSLQLILRGTLNDALKPVQASGLDNQIGDLKLDGLAELQAVTSEMVRLMETATVPILAVDGNGLVNGWNQKVAELSGLRVDEAIGRHILTLVEDSSVSIVQRMLYLALQGKEEKEVRFELKTHGSKRDDGPVILVVNACASRDLHDHVVGVCFVAQDMTVHKLVMDKFTRVEGDYKAIIHNPNPLIPPIFGADQFGWCSEWNVAMTKLTGWHRDEVIDKMLLGEVFDSSNASCLLKSKDDFVRLCIIINSALAGEEAENAPFGLFDRNGKYIECLLSVNRKVNADGVVTGVFCFIHVPSDDLQHALHVQQASEQTAQRRLKAFSYMRHAINKPLSGMLYSRETLKSTGLNEEQMRQVHVADSCHRQLNKILADLDQDNITDKSSCLDLDMAEFVLEDVVVSAVSQVLIGCQGKGIRVACNLPERFMKQKVYGDGIRLQQILSDFLFVSVKFSPVGGSVDISSKLTKNSIGENLHLIDFELRIKHQGAGVPAEILSQMYEEDNKEPSEEGLSLLVSRNLLRLMNGNIRHIREAGMSTFILTAELAAAPSAVGQ</sequence>
<organism>
    <name type="scientific">Sorghum bicolor</name>
    <name type="common">Sorghum</name>
    <name type="synonym">Sorghum vulgare</name>
    <dbReference type="NCBI Taxonomy" id="4558"/>
    <lineage>
        <taxon>Eukaryota</taxon>
        <taxon>Viridiplantae</taxon>
        <taxon>Streptophyta</taxon>
        <taxon>Embryophyta</taxon>
        <taxon>Tracheophyta</taxon>
        <taxon>Spermatophyta</taxon>
        <taxon>Magnoliopsida</taxon>
        <taxon>Liliopsida</taxon>
        <taxon>Poales</taxon>
        <taxon>Poaceae</taxon>
        <taxon>PACMAD clade</taxon>
        <taxon>Panicoideae</taxon>
        <taxon>Andropogonodae</taxon>
        <taxon>Andropogoneae</taxon>
        <taxon>Sorghinae</taxon>
        <taxon>Sorghum</taxon>
    </lineage>
</organism>
<reference key="1">
    <citation type="journal article" date="1997" name="Plant Physiol.">
        <title>The Sorghum bicolor photoperiod sensitivity gene, Ma3, encodes a phytochrome B.</title>
        <authorList>
            <person name="Childs K.L."/>
            <person name="Miller F.R."/>
            <person name="Cordonnier-Pratt M.-M."/>
            <person name="Pratt L.H."/>
            <person name="Morgan P.W."/>
            <person name="Mullet J.E."/>
        </authorList>
    </citation>
    <scope>NUCLEOTIDE SEQUENCE [MRNA]</scope>
</reference>
<protein>
    <recommendedName>
        <fullName>Phytochrome a</fullName>
    </recommendedName>
</protein>
<feature type="chain" id="PRO_0000171987" description="Phytochrome a">
    <location>
        <begin position="1"/>
        <end position="1131"/>
    </location>
</feature>
<feature type="domain" description="GAF">
    <location>
        <begin position="219"/>
        <end position="404"/>
    </location>
</feature>
<feature type="domain" description="PAS 1" evidence="3">
    <location>
        <begin position="620"/>
        <end position="690"/>
    </location>
</feature>
<feature type="domain" description="PAS 2" evidence="3">
    <location>
        <begin position="750"/>
        <end position="834"/>
    </location>
</feature>
<feature type="domain" description="Histidine kinase" evidence="2">
    <location>
        <begin position="904"/>
        <end position="1124"/>
    </location>
</feature>
<feature type="region of interest" description="Disordered" evidence="4">
    <location>
        <begin position="1"/>
        <end position="26"/>
    </location>
</feature>
<feature type="compositionally biased region" description="Low complexity" evidence="4">
    <location>
        <begin position="1"/>
        <end position="23"/>
    </location>
</feature>
<feature type="binding site" description="covalent" evidence="1">
    <location>
        <position position="324"/>
    </location>
    <ligand>
        <name>phytochromobilin</name>
        <dbReference type="ChEBI" id="CHEBI:189064"/>
    </ligand>
</feature>
<accession>P93526</accession>
<name>PHYA_SORBI</name>
<keyword id="KW-0157">Chromophore</keyword>
<keyword id="KW-0600">Photoreceptor protein</keyword>
<keyword id="KW-0675">Receptor</keyword>
<keyword id="KW-0677">Repeat</keyword>
<keyword id="KW-0716">Sensory transduction</keyword>
<keyword id="KW-0804">Transcription</keyword>
<keyword id="KW-0805">Transcription regulation</keyword>
<dbReference type="EMBL" id="U56729">
    <property type="protein sequence ID" value="AAB41397.1"/>
    <property type="molecule type" value="mRNA"/>
</dbReference>
<dbReference type="SMR" id="P93526"/>
<dbReference type="eggNOG" id="ENOG502QRSA">
    <property type="taxonomic scope" value="Eukaryota"/>
</dbReference>
<dbReference type="HOGENOM" id="CLU_010418_0_0_1"/>
<dbReference type="ExpressionAtlas" id="P93526">
    <property type="expression patterns" value="baseline and differential"/>
</dbReference>
<dbReference type="GO" id="GO:0000155">
    <property type="term" value="F:phosphorelay sensor kinase activity"/>
    <property type="evidence" value="ECO:0007669"/>
    <property type="project" value="InterPro"/>
</dbReference>
<dbReference type="GO" id="GO:0009881">
    <property type="term" value="F:photoreceptor activity"/>
    <property type="evidence" value="ECO:0007669"/>
    <property type="project" value="UniProtKB-KW"/>
</dbReference>
<dbReference type="GO" id="GO:0042803">
    <property type="term" value="F:protein homodimerization activity"/>
    <property type="evidence" value="ECO:0007669"/>
    <property type="project" value="InterPro"/>
</dbReference>
<dbReference type="GO" id="GO:0009584">
    <property type="term" value="P:detection of visible light"/>
    <property type="evidence" value="ECO:0007669"/>
    <property type="project" value="InterPro"/>
</dbReference>
<dbReference type="GO" id="GO:0009585">
    <property type="term" value="P:red, far-red light phototransduction"/>
    <property type="evidence" value="ECO:0007669"/>
    <property type="project" value="InterPro"/>
</dbReference>
<dbReference type="GO" id="GO:0006355">
    <property type="term" value="P:regulation of DNA-templated transcription"/>
    <property type="evidence" value="ECO:0007669"/>
    <property type="project" value="InterPro"/>
</dbReference>
<dbReference type="CDD" id="cd00082">
    <property type="entry name" value="HisKA"/>
    <property type="match status" value="1"/>
</dbReference>
<dbReference type="CDD" id="cd00130">
    <property type="entry name" value="PAS"/>
    <property type="match status" value="2"/>
</dbReference>
<dbReference type="FunFam" id="3.30.450.20:FF:000039">
    <property type="entry name" value="Phytochrome"/>
    <property type="match status" value="1"/>
</dbReference>
<dbReference type="FunFam" id="3.30.450.270:FF:000001">
    <property type="entry name" value="Phytochrome"/>
    <property type="match status" value="1"/>
</dbReference>
<dbReference type="Gene3D" id="3.30.450.270">
    <property type="match status" value="1"/>
</dbReference>
<dbReference type="Gene3D" id="3.30.450.40">
    <property type="match status" value="1"/>
</dbReference>
<dbReference type="Gene3D" id="3.30.565.10">
    <property type="entry name" value="Histidine kinase-like ATPase, C-terminal domain"/>
    <property type="match status" value="1"/>
</dbReference>
<dbReference type="Gene3D" id="3.30.450.20">
    <property type="entry name" value="PAS domain"/>
    <property type="match status" value="3"/>
</dbReference>
<dbReference type="InterPro" id="IPR003018">
    <property type="entry name" value="GAF"/>
</dbReference>
<dbReference type="InterPro" id="IPR029016">
    <property type="entry name" value="GAF-like_dom_sf"/>
</dbReference>
<dbReference type="InterPro" id="IPR036890">
    <property type="entry name" value="HATPase_C_sf"/>
</dbReference>
<dbReference type="InterPro" id="IPR005467">
    <property type="entry name" value="His_kinase_dom"/>
</dbReference>
<dbReference type="InterPro" id="IPR003661">
    <property type="entry name" value="HisK_dim/P_dom"/>
</dbReference>
<dbReference type="InterPro" id="IPR000014">
    <property type="entry name" value="PAS"/>
</dbReference>
<dbReference type="InterPro" id="IPR035965">
    <property type="entry name" value="PAS-like_dom_sf"/>
</dbReference>
<dbReference type="InterPro" id="IPR013654">
    <property type="entry name" value="PAS_2"/>
</dbReference>
<dbReference type="InterPro" id="IPR013767">
    <property type="entry name" value="PAS_fold"/>
</dbReference>
<dbReference type="InterPro" id="IPR016132">
    <property type="entry name" value="Phyto_chromo_attachment"/>
</dbReference>
<dbReference type="InterPro" id="IPR013516">
    <property type="entry name" value="Phyto_chromo_BS"/>
</dbReference>
<dbReference type="InterPro" id="IPR001294">
    <property type="entry name" value="Phytochrome"/>
</dbReference>
<dbReference type="InterPro" id="IPR012129">
    <property type="entry name" value="Phytochrome_A-E"/>
</dbReference>
<dbReference type="InterPro" id="IPR013515">
    <property type="entry name" value="Phytochrome_cen-reg"/>
</dbReference>
<dbReference type="InterPro" id="IPR043150">
    <property type="entry name" value="Phytochrome_PHY_sf"/>
</dbReference>
<dbReference type="NCBIfam" id="TIGR00229">
    <property type="entry name" value="sensory_box"/>
    <property type="match status" value="1"/>
</dbReference>
<dbReference type="PANTHER" id="PTHR47876">
    <property type="entry name" value="OS08G0260000 PROTEIN"/>
    <property type="match status" value="1"/>
</dbReference>
<dbReference type="PANTHER" id="PTHR47876:SF3">
    <property type="entry name" value="PHYTOCHROME 1"/>
    <property type="match status" value="1"/>
</dbReference>
<dbReference type="Pfam" id="PF01590">
    <property type="entry name" value="GAF"/>
    <property type="match status" value="1"/>
</dbReference>
<dbReference type="Pfam" id="PF02518">
    <property type="entry name" value="HATPase_c"/>
    <property type="match status" value="1"/>
</dbReference>
<dbReference type="Pfam" id="PF00512">
    <property type="entry name" value="HisKA"/>
    <property type="match status" value="1"/>
</dbReference>
<dbReference type="Pfam" id="PF00989">
    <property type="entry name" value="PAS"/>
    <property type="match status" value="2"/>
</dbReference>
<dbReference type="Pfam" id="PF08446">
    <property type="entry name" value="PAS_2"/>
    <property type="match status" value="1"/>
</dbReference>
<dbReference type="Pfam" id="PF00360">
    <property type="entry name" value="PHY"/>
    <property type="match status" value="1"/>
</dbReference>
<dbReference type="PIRSF" id="PIRSF000084">
    <property type="entry name" value="Phytochrome"/>
    <property type="match status" value="1"/>
</dbReference>
<dbReference type="PRINTS" id="PR01033">
    <property type="entry name" value="PHYTOCHROME"/>
</dbReference>
<dbReference type="SMART" id="SM00065">
    <property type="entry name" value="GAF"/>
    <property type="match status" value="1"/>
</dbReference>
<dbReference type="SMART" id="SM00387">
    <property type="entry name" value="HATPase_c"/>
    <property type="match status" value="1"/>
</dbReference>
<dbReference type="SMART" id="SM00388">
    <property type="entry name" value="HisKA"/>
    <property type="match status" value="1"/>
</dbReference>
<dbReference type="SMART" id="SM00091">
    <property type="entry name" value="PAS"/>
    <property type="match status" value="2"/>
</dbReference>
<dbReference type="SUPFAM" id="SSF55874">
    <property type="entry name" value="ATPase domain of HSP90 chaperone/DNA topoisomerase II/histidine kinase"/>
    <property type="match status" value="1"/>
</dbReference>
<dbReference type="SUPFAM" id="SSF55781">
    <property type="entry name" value="GAF domain-like"/>
    <property type="match status" value="2"/>
</dbReference>
<dbReference type="SUPFAM" id="SSF55785">
    <property type="entry name" value="PYP-like sensor domain (PAS domain)"/>
    <property type="match status" value="3"/>
</dbReference>
<dbReference type="PROSITE" id="PS50109">
    <property type="entry name" value="HIS_KIN"/>
    <property type="match status" value="1"/>
</dbReference>
<dbReference type="PROSITE" id="PS50112">
    <property type="entry name" value="PAS"/>
    <property type="match status" value="2"/>
</dbReference>
<dbReference type="PROSITE" id="PS00245">
    <property type="entry name" value="PHYTOCHROME_1"/>
    <property type="match status" value="1"/>
</dbReference>
<dbReference type="PROSITE" id="PS50046">
    <property type="entry name" value="PHYTOCHROME_2"/>
    <property type="match status" value="1"/>
</dbReference>
<evidence type="ECO:0000250" key="1"/>
<evidence type="ECO:0000255" key="2">
    <source>
        <dbReference type="PROSITE-ProRule" id="PRU00107"/>
    </source>
</evidence>
<evidence type="ECO:0000255" key="3">
    <source>
        <dbReference type="PROSITE-ProRule" id="PRU00140"/>
    </source>
</evidence>
<evidence type="ECO:0000256" key="4">
    <source>
        <dbReference type="SAM" id="MobiDB-lite"/>
    </source>
</evidence>
<evidence type="ECO:0000305" key="5"/>
<comment type="function">
    <text evidence="1">Regulatory photoreceptor which exists in two forms that are reversibly interconvertible by light: the Pr form that absorbs maximally in the red region of the spectrum and the Pfr form that absorbs maximally in the far-red region. Photoconversion of Pr to Pfr induces an array of morphogenic responses, whereas reconversion of Pfr to Pr cancels the induction of those responses. Pfr controls the expression of a number of nuclear genes including those encoding the small subunit of ribulose-bisphosphate carboxylase, chlorophyll A/B binding protein, protochlorophyllide reductase, rRNA, etc. It also controls the expression of its own gene(s) in a negative feedback fashion (By similarity).</text>
</comment>
<comment type="subunit">
    <text evidence="1">Homodimer.</text>
</comment>
<comment type="PTM">
    <text evidence="1">Contains one covalently linked phytochromobilin chromophore.</text>
</comment>
<comment type="similarity">
    <text evidence="5">Belongs to the phytochrome family.</text>
</comment>
<proteinExistence type="evidence at transcript level"/>
<gene>
    <name type="primary">PHYA</name>
    <name type="ordered locus">Sb03g017600</name>
</gene>